<comment type="function">
    <text evidence="1">One of the primary rRNA binding proteins, it binds specifically to the 5'-end of 16S ribosomal RNA.</text>
</comment>
<comment type="subunit">
    <text evidence="1">Part of the 30S ribosomal subunit.</text>
</comment>
<comment type="similarity">
    <text evidence="1">Belongs to the universal ribosomal protein uS17 family.</text>
</comment>
<protein>
    <recommendedName>
        <fullName evidence="1">Small ribosomal subunit protein uS17</fullName>
    </recommendedName>
    <alternativeName>
        <fullName evidence="2">30S ribosomal protein S17</fullName>
    </alternativeName>
</protein>
<proteinExistence type="inferred from homology"/>
<dbReference type="EMBL" id="CP000557">
    <property type="protein sequence ID" value="ABO65502.1"/>
    <property type="molecule type" value="Genomic_DNA"/>
</dbReference>
<dbReference type="RefSeq" id="WP_008881935.1">
    <property type="nucleotide sequence ID" value="NC_009328.1"/>
</dbReference>
<dbReference type="SMR" id="A4IJJ8"/>
<dbReference type="GeneID" id="87622317"/>
<dbReference type="KEGG" id="gtn:GTNG_0115"/>
<dbReference type="eggNOG" id="COG0186">
    <property type="taxonomic scope" value="Bacteria"/>
</dbReference>
<dbReference type="HOGENOM" id="CLU_073626_1_0_9"/>
<dbReference type="Proteomes" id="UP000001578">
    <property type="component" value="Chromosome"/>
</dbReference>
<dbReference type="GO" id="GO:0022627">
    <property type="term" value="C:cytosolic small ribosomal subunit"/>
    <property type="evidence" value="ECO:0007669"/>
    <property type="project" value="TreeGrafter"/>
</dbReference>
<dbReference type="GO" id="GO:0019843">
    <property type="term" value="F:rRNA binding"/>
    <property type="evidence" value="ECO:0007669"/>
    <property type="project" value="UniProtKB-UniRule"/>
</dbReference>
<dbReference type="GO" id="GO:0003735">
    <property type="term" value="F:structural constituent of ribosome"/>
    <property type="evidence" value="ECO:0007669"/>
    <property type="project" value="InterPro"/>
</dbReference>
<dbReference type="GO" id="GO:0006412">
    <property type="term" value="P:translation"/>
    <property type="evidence" value="ECO:0007669"/>
    <property type="project" value="UniProtKB-UniRule"/>
</dbReference>
<dbReference type="CDD" id="cd00364">
    <property type="entry name" value="Ribosomal_uS17"/>
    <property type="match status" value="1"/>
</dbReference>
<dbReference type="FunFam" id="2.40.50.140:FF:000026">
    <property type="entry name" value="30S ribosomal protein S17"/>
    <property type="match status" value="1"/>
</dbReference>
<dbReference type="Gene3D" id="2.40.50.140">
    <property type="entry name" value="Nucleic acid-binding proteins"/>
    <property type="match status" value="1"/>
</dbReference>
<dbReference type="HAMAP" id="MF_01345_B">
    <property type="entry name" value="Ribosomal_uS17_B"/>
    <property type="match status" value="1"/>
</dbReference>
<dbReference type="InterPro" id="IPR012340">
    <property type="entry name" value="NA-bd_OB-fold"/>
</dbReference>
<dbReference type="InterPro" id="IPR000266">
    <property type="entry name" value="Ribosomal_uS17"/>
</dbReference>
<dbReference type="InterPro" id="IPR019984">
    <property type="entry name" value="Ribosomal_uS17_bact/chlr"/>
</dbReference>
<dbReference type="InterPro" id="IPR019979">
    <property type="entry name" value="Ribosomal_uS17_CS"/>
</dbReference>
<dbReference type="NCBIfam" id="NF004123">
    <property type="entry name" value="PRK05610.1"/>
    <property type="match status" value="1"/>
</dbReference>
<dbReference type="NCBIfam" id="TIGR03635">
    <property type="entry name" value="uS17_bact"/>
    <property type="match status" value="1"/>
</dbReference>
<dbReference type="PANTHER" id="PTHR10744">
    <property type="entry name" value="40S RIBOSOMAL PROTEIN S11 FAMILY MEMBER"/>
    <property type="match status" value="1"/>
</dbReference>
<dbReference type="PANTHER" id="PTHR10744:SF1">
    <property type="entry name" value="SMALL RIBOSOMAL SUBUNIT PROTEIN US17M"/>
    <property type="match status" value="1"/>
</dbReference>
<dbReference type="Pfam" id="PF00366">
    <property type="entry name" value="Ribosomal_S17"/>
    <property type="match status" value="1"/>
</dbReference>
<dbReference type="PRINTS" id="PR00973">
    <property type="entry name" value="RIBOSOMALS17"/>
</dbReference>
<dbReference type="SUPFAM" id="SSF50249">
    <property type="entry name" value="Nucleic acid-binding proteins"/>
    <property type="match status" value="1"/>
</dbReference>
<dbReference type="PROSITE" id="PS00056">
    <property type="entry name" value="RIBOSOMAL_S17"/>
    <property type="match status" value="1"/>
</dbReference>
<gene>
    <name evidence="1" type="primary">rpsQ</name>
    <name type="ordered locus">GTNG_0115</name>
</gene>
<keyword id="KW-0687">Ribonucleoprotein</keyword>
<keyword id="KW-0689">Ribosomal protein</keyword>
<keyword id="KW-0694">RNA-binding</keyword>
<keyword id="KW-0699">rRNA-binding</keyword>
<organism>
    <name type="scientific">Geobacillus thermodenitrificans (strain NG80-2)</name>
    <dbReference type="NCBI Taxonomy" id="420246"/>
    <lineage>
        <taxon>Bacteria</taxon>
        <taxon>Bacillati</taxon>
        <taxon>Bacillota</taxon>
        <taxon>Bacilli</taxon>
        <taxon>Bacillales</taxon>
        <taxon>Anoxybacillaceae</taxon>
        <taxon>Geobacillus</taxon>
    </lineage>
</organism>
<reference key="1">
    <citation type="journal article" date="2007" name="Proc. Natl. Acad. Sci. U.S.A.">
        <title>Genome and proteome of long-chain alkane degrading Geobacillus thermodenitrificans NG80-2 isolated from a deep-subsurface oil reservoir.</title>
        <authorList>
            <person name="Feng L."/>
            <person name="Wang W."/>
            <person name="Cheng J."/>
            <person name="Ren Y."/>
            <person name="Zhao G."/>
            <person name="Gao C."/>
            <person name="Tang Y."/>
            <person name="Liu X."/>
            <person name="Han W."/>
            <person name="Peng X."/>
            <person name="Liu R."/>
            <person name="Wang L."/>
        </authorList>
    </citation>
    <scope>NUCLEOTIDE SEQUENCE [LARGE SCALE GENOMIC DNA]</scope>
    <source>
        <strain>NG80-2</strain>
    </source>
</reference>
<name>RS17_GEOTN</name>
<feature type="chain" id="PRO_1000054957" description="Small ribosomal subunit protein uS17">
    <location>
        <begin position="1"/>
        <end position="87"/>
    </location>
</feature>
<sequence length="87" mass="10189">MSERNQRKVYVGRVVSDKMDKTITVLVETYKKHPLYGKRVKYSKKYKAHDEHNIAKVGDIVKIMETRPLSATKRFRLVEVVEKAVIL</sequence>
<accession>A4IJJ8</accession>
<evidence type="ECO:0000255" key="1">
    <source>
        <dbReference type="HAMAP-Rule" id="MF_01345"/>
    </source>
</evidence>
<evidence type="ECO:0000305" key="2"/>